<gene>
    <name evidence="1" type="primary">rlmE</name>
    <name evidence="1" type="synonym">ftsJ</name>
    <name evidence="1" type="synonym">rrmJ</name>
    <name type="ordered locus">Swoo_3569</name>
</gene>
<dbReference type="EC" id="2.1.1.166" evidence="1"/>
<dbReference type="EMBL" id="CP000961">
    <property type="protein sequence ID" value="ACA87833.1"/>
    <property type="molecule type" value="Genomic_DNA"/>
</dbReference>
<dbReference type="RefSeq" id="WP_012326166.1">
    <property type="nucleotide sequence ID" value="NC_010506.1"/>
</dbReference>
<dbReference type="SMR" id="B1KRR8"/>
<dbReference type="STRING" id="392500.Swoo_3569"/>
<dbReference type="KEGG" id="swd:Swoo_3569"/>
<dbReference type="eggNOG" id="COG0293">
    <property type="taxonomic scope" value="Bacteria"/>
</dbReference>
<dbReference type="HOGENOM" id="CLU_009422_4_0_6"/>
<dbReference type="Proteomes" id="UP000002168">
    <property type="component" value="Chromosome"/>
</dbReference>
<dbReference type="GO" id="GO:0005737">
    <property type="term" value="C:cytoplasm"/>
    <property type="evidence" value="ECO:0007669"/>
    <property type="project" value="UniProtKB-SubCell"/>
</dbReference>
<dbReference type="GO" id="GO:0008650">
    <property type="term" value="F:rRNA (uridine-2'-O-)-methyltransferase activity"/>
    <property type="evidence" value="ECO:0007669"/>
    <property type="project" value="UniProtKB-UniRule"/>
</dbReference>
<dbReference type="CDD" id="cd02440">
    <property type="entry name" value="AdoMet_MTases"/>
    <property type="match status" value="1"/>
</dbReference>
<dbReference type="FunFam" id="3.40.50.150:FF:000005">
    <property type="entry name" value="Ribosomal RNA large subunit methyltransferase E"/>
    <property type="match status" value="1"/>
</dbReference>
<dbReference type="Gene3D" id="3.40.50.150">
    <property type="entry name" value="Vaccinia Virus protein VP39"/>
    <property type="match status" value="1"/>
</dbReference>
<dbReference type="HAMAP" id="MF_01547">
    <property type="entry name" value="RNA_methyltr_E"/>
    <property type="match status" value="1"/>
</dbReference>
<dbReference type="InterPro" id="IPR050082">
    <property type="entry name" value="RNA_methyltr_RlmE"/>
</dbReference>
<dbReference type="InterPro" id="IPR002877">
    <property type="entry name" value="RNA_MeTrfase_FtsJ_dom"/>
</dbReference>
<dbReference type="InterPro" id="IPR015507">
    <property type="entry name" value="rRNA-MeTfrase_E"/>
</dbReference>
<dbReference type="InterPro" id="IPR029063">
    <property type="entry name" value="SAM-dependent_MTases_sf"/>
</dbReference>
<dbReference type="NCBIfam" id="NF008390">
    <property type="entry name" value="PRK11188.1"/>
    <property type="match status" value="1"/>
</dbReference>
<dbReference type="PANTHER" id="PTHR10920">
    <property type="entry name" value="RIBOSOMAL RNA METHYLTRANSFERASE"/>
    <property type="match status" value="1"/>
</dbReference>
<dbReference type="PANTHER" id="PTHR10920:SF18">
    <property type="entry name" value="RRNA METHYLTRANSFERASE 2, MITOCHONDRIAL"/>
    <property type="match status" value="1"/>
</dbReference>
<dbReference type="Pfam" id="PF01728">
    <property type="entry name" value="FtsJ"/>
    <property type="match status" value="1"/>
</dbReference>
<dbReference type="PIRSF" id="PIRSF005461">
    <property type="entry name" value="23S_rRNA_mtase"/>
    <property type="match status" value="1"/>
</dbReference>
<dbReference type="SUPFAM" id="SSF53335">
    <property type="entry name" value="S-adenosyl-L-methionine-dependent methyltransferases"/>
    <property type="match status" value="1"/>
</dbReference>
<comment type="function">
    <text evidence="1">Specifically methylates the uridine in position 2552 of 23S rRNA at the 2'-O position of the ribose in the fully assembled 50S ribosomal subunit.</text>
</comment>
<comment type="catalytic activity">
    <reaction evidence="1">
        <text>uridine(2552) in 23S rRNA + S-adenosyl-L-methionine = 2'-O-methyluridine(2552) in 23S rRNA + S-adenosyl-L-homocysteine + H(+)</text>
        <dbReference type="Rhea" id="RHEA:42720"/>
        <dbReference type="Rhea" id="RHEA-COMP:10202"/>
        <dbReference type="Rhea" id="RHEA-COMP:10203"/>
        <dbReference type="ChEBI" id="CHEBI:15378"/>
        <dbReference type="ChEBI" id="CHEBI:57856"/>
        <dbReference type="ChEBI" id="CHEBI:59789"/>
        <dbReference type="ChEBI" id="CHEBI:65315"/>
        <dbReference type="ChEBI" id="CHEBI:74478"/>
        <dbReference type="EC" id="2.1.1.166"/>
    </reaction>
</comment>
<comment type="subcellular location">
    <subcellularLocation>
        <location evidence="1">Cytoplasm</location>
    </subcellularLocation>
</comment>
<comment type="similarity">
    <text evidence="1">Belongs to the class I-like SAM-binding methyltransferase superfamily. RNA methyltransferase RlmE family.</text>
</comment>
<evidence type="ECO:0000255" key="1">
    <source>
        <dbReference type="HAMAP-Rule" id="MF_01547"/>
    </source>
</evidence>
<organism>
    <name type="scientific">Shewanella woodyi (strain ATCC 51908 / MS32)</name>
    <dbReference type="NCBI Taxonomy" id="392500"/>
    <lineage>
        <taxon>Bacteria</taxon>
        <taxon>Pseudomonadati</taxon>
        <taxon>Pseudomonadota</taxon>
        <taxon>Gammaproteobacteria</taxon>
        <taxon>Alteromonadales</taxon>
        <taxon>Shewanellaceae</taxon>
        <taxon>Shewanella</taxon>
    </lineage>
</organism>
<name>RLME_SHEWM</name>
<proteinExistence type="inferred from homology"/>
<feature type="chain" id="PRO_1000195021" description="Ribosomal RNA large subunit methyltransferase E">
    <location>
        <begin position="1"/>
        <end position="209"/>
    </location>
</feature>
<feature type="active site" description="Proton acceptor" evidence="1">
    <location>
        <position position="164"/>
    </location>
</feature>
<feature type="binding site" evidence="1">
    <location>
        <position position="63"/>
    </location>
    <ligand>
        <name>S-adenosyl-L-methionine</name>
        <dbReference type="ChEBI" id="CHEBI:59789"/>
    </ligand>
</feature>
<feature type="binding site" evidence="1">
    <location>
        <position position="65"/>
    </location>
    <ligand>
        <name>S-adenosyl-L-methionine</name>
        <dbReference type="ChEBI" id="CHEBI:59789"/>
    </ligand>
</feature>
<feature type="binding site" evidence="1">
    <location>
        <position position="83"/>
    </location>
    <ligand>
        <name>S-adenosyl-L-methionine</name>
        <dbReference type="ChEBI" id="CHEBI:59789"/>
    </ligand>
</feature>
<feature type="binding site" evidence="1">
    <location>
        <position position="99"/>
    </location>
    <ligand>
        <name>S-adenosyl-L-methionine</name>
        <dbReference type="ChEBI" id="CHEBI:59789"/>
    </ligand>
</feature>
<feature type="binding site" evidence="1">
    <location>
        <position position="124"/>
    </location>
    <ligand>
        <name>S-adenosyl-L-methionine</name>
        <dbReference type="ChEBI" id="CHEBI:59789"/>
    </ligand>
</feature>
<protein>
    <recommendedName>
        <fullName evidence="1">Ribosomal RNA large subunit methyltransferase E</fullName>
        <ecNumber evidence="1">2.1.1.166</ecNumber>
    </recommendedName>
    <alternativeName>
        <fullName evidence="1">23S rRNA Um2552 methyltransferase</fullName>
    </alternativeName>
    <alternativeName>
        <fullName evidence="1">rRNA (uridine-2'-O-)-methyltransferase</fullName>
    </alternativeName>
</protein>
<sequence>MSGKKRTASSSRWMQEHFDDHYVKLAQKRGFRSRAAFKIEEIQEKDKLIRPGMTVVDLGAAPGGWSQVAVKLAGDNGKVIACDILPMDPIVGVDFLQGDFREEKVLDALLTRVGDAKVDVVLSDMAPNMSGTGGVDQPRAMYLVELALDMCHQVLAPNGCFAVKVFQGEGFEEYMKSVREAFKTVKTRKPDSSRPRSREVYLVATGYKL</sequence>
<keyword id="KW-0963">Cytoplasm</keyword>
<keyword id="KW-0489">Methyltransferase</keyword>
<keyword id="KW-1185">Reference proteome</keyword>
<keyword id="KW-0698">rRNA processing</keyword>
<keyword id="KW-0949">S-adenosyl-L-methionine</keyword>
<keyword id="KW-0808">Transferase</keyword>
<reference key="1">
    <citation type="submission" date="2008-02" db="EMBL/GenBank/DDBJ databases">
        <title>Complete sequence of Shewanella woodyi ATCC 51908.</title>
        <authorList>
            <consortium name="US DOE Joint Genome Institute"/>
            <person name="Copeland A."/>
            <person name="Lucas S."/>
            <person name="Lapidus A."/>
            <person name="Glavina del Rio T."/>
            <person name="Dalin E."/>
            <person name="Tice H."/>
            <person name="Bruce D."/>
            <person name="Goodwin L."/>
            <person name="Pitluck S."/>
            <person name="Sims D."/>
            <person name="Brettin T."/>
            <person name="Detter J.C."/>
            <person name="Han C."/>
            <person name="Kuske C.R."/>
            <person name="Schmutz J."/>
            <person name="Larimer F."/>
            <person name="Land M."/>
            <person name="Hauser L."/>
            <person name="Kyrpides N."/>
            <person name="Lykidis A."/>
            <person name="Zhao J.-S."/>
            <person name="Richardson P."/>
        </authorList>
    </citation>
    <scope>NUCLEOTIDE SEQUENCE [LARGE SCALE GENOMIC DNA]</scope>
    <source>
        <strain>ATCC 51908 / MS32</strain>
    </source>
</reference>
<accession>B1KRR8</accession>